<proteinExistence type="inferred from homology"/>
<protein>
    <recommendedName>
        <fullName>UPS-like protein C36.10</fullName>
    </recommendedName>
</protein>
<keyword id="KW-0963">Cytoplasm</keyword>
<keyword id="KW-0472">Membrane</keyword>
<keyword id="KW-0496">Mitochondrion</keyword>
<keyword id="KW-0999">Mitochondrion inner membrane</keyword>
<keyword id="KW-1185">Reference proteome</keyword>
<evidence type="ECO:0000250" key="1"/>
<evidence type="ECO:0000255" key="2">
    <source>
        <dbReference type="PROSITE-ProRule" id="PRU00158"/>
    </source>
</evidence>
<evidence type="ECO:0000269" key="3">
    <source>
    </source>
</evidence>
<evidence type="ECO:0000305" key="4"/>
<gene>
    <name type="ORF">SPBC36.10</name>
</gene>
<dbReference type="EMBL" id="CU329671">
    <property type="protein sequence ID" value="CAA19058.1"/>
    <property type="molecule type" value="Genomic_DNA"/>
</dbReference>
<dbReference type="PIR" id="T40305">
    <property type="entry name" value="T40305"/>
</dbReference>
<dbReference type="SMR" id="O59707"/>
<dbReference type="BioGRID" id="277438">
    <property type="interactions" value="24"/>
</dbReference>
<dbReference type="FunCoup" id="O59707">
    <property type="interactions" value="275"/>
</dbReference>
<dbReference type="STRING" id="284812.O59707"/>
<dbReference type="PaxDb" id="4896-SPBC36.10.1"/>
<dbReference type="EnsemblFungi" id="SPBC36.10.1">
    <property type="protein sequence ID" value="SPBC36.10.1:pep"/>
    <property type="gene ID" value="SPBC36.10"/>
</dbReference>
<dbReference type="KEGG" id="spo:2540922"/>
<dbReference type="PomBase" id="SPBC36.10"/>
<dbReference type="VEuPathDB" id="FungiDB:SPBC36.10"/>
<dbReference type="eggNOG" id="KOG3336">
    <property type="taxonomic scope" value="Eukaryota"/>
</dbReference>
<dbReference type="HOGENOM" id="CLU_067902_1_1_1"/>
<dbReference type="InParanoid" id="O59707"/>
<dbReference type="OMA" id="YCPWNEK"/>
<dbReference type="PhylomeDB" id="O59707"/>
<dbReference type="Reactome" id="R-SPO-6803204">
    <property type="pathway name" value="TP53 Regulates Transcription of Genes Involved in Cytochrome C Release"/>
</dbReference>
<dbReference type="PRO" id="PR:O59707"/>
<dbReference type="Proteomes" id="UP000002485">
    <property type="component" value="Chromosome II"/>
</dbReference>
<dbReference type="GO" id="GO:0005737">
    <property type="term" value="C:cytoplasm"/>
    <property type="evidence" value="ECO:0007005"/>
    <property type="project" value="PomBase"/>
</dbReference>
<dbReference type="GO" id="GO:0031314">
    <property type="term" value="C:extrinsic component of mitochondrial inner membrane"/>
    <property type="evidence" value="ECO:0000266"/>
    <property type="project" value="PomBase"/>
</dbReference>
<dbReference type="GO" id="GO:0005758">
    <property type="term" value="C:mitochondrial intermembrane space"/>
    <property type="evidence" value="ECO:0000318"/>
    <property type="project" value="GO_Central"/>
</dbReference>
<dbReference type="GO" id="GO:1990050">
    <property type="term" value="F:phosphatidic acid transfer activity"/>
    <property type="evidence" value="ECO:0000318"/>
    <property type="project" value="GO_Central"/>
</dbReference>
<dbReference type="GO" id="GO:0007006">
    <property type="term" value="P:mitochondrial membrane organization"/>
    <property type="evidence" value="ECO:0000305"/>
    <property type="project" value="PomBase"/>
</dbReference>
<dbReference type="GO" id="GO:0045332">
    <property type="term" value="P:phospholipid translocation"/>
    <property type="evidence" value="ECO:0000266"/>
    <property type="project" value="PomBase"/>
</dbReference>
<dbReference type="GO" id="GO:0015914">
    <property type="term" value="P:phospholipid transport"/>
    <property type="evidence" value="ECO:0000318"/>
    <property type="project" value="GO_Central"/>
</dbReference>
<dbReference type="InterPro" id="IPR006797">
    <property type="entry name" value="PRELI/MSF1_dom"/>
</dbReference>
<dbReference type="InterPro" id="IPR037365">
    <property type="entry name" value="Slowmo/Ups"/>
</dbReference>
<dbReference type="PANTHER" id="PTHR11158">
    <property type="entry name" value="MSF1/PX19 RELATED"/>
    <property type="match status" value="1"/>
</dbReference>
<dbReference type="Pfam" id="PF04707">
    <property type="entry name" value="PRELI"/>
    <property type="match status" value="1"/>
</dbReference>
<dbReference type="PROSITE" id="PS50904">
    <property type="entry name" value="PRELI_MSF1"/>
    <property type="match status" value="1"/>
</dbReference>
<feature type="chain" id="PRO_0000346780" description="UPS-like protein C36.10">
    <location>
        <begin position="1"/>
        <end position="184"/>
    </location>
</feature>
<feature type="domain" description="PRELI/MSF1" evidence="2">
    <location>
        <begin position="1"/>
        <end position="172"/>
    </location>
</feature>
<reference key="1">
    <citation type="journal article" date="2002" name="Nature">
        <title>The genome sequence of Schizosaccharomyces pombe.</title>
        <authorList>
            <person name="Wood V."/>
            <person name="Gwilliam R."/>
            <person name="Rajandream M.A."/>
            <person name="Lyne M.H."/>
            <person name="Lyne R."/>
            <person name="Stewart A."/>
            <person name="Sgouros J.G."/>
            <person name="Peat N."/>
            <person name="Hayles J."/>
            <person name="Baker S.G."/>
            <person name="Basham D."/>
            <person name="Bowman S."/>
            <person name="Brooks K."/>
            <person name="Brown D."/>
            <person name="Brown S."/>
            <person name="Chillingworth T."/>
            <person name="Churcher C.M."/>
            <person name="Collins M."/>
            <person name="Connor R."/>
            <person name="Cronin A."/>
            <person name="Davis P."/>
            <person name="Feltwell T."/>
            <person name="Fraser A."/>
            <person name="Gentles S."/>
            <person name="Goble A."/>
            <person name="Hamlin N."/>
            <person name="Harris D.E."/>
            <person name="Hidalgo J."/>
            <person name="Hodgson G."/>
            <person name="Holroyd S."/>
            <person name="Hornsby T."/>
            <person name="Howarth S."/>
            <person name="Huckle E.J."/>
            <person name="Hunt S."/>
            <person name="Jagels K."/>
            <person name="James K.D."/>
            <person name="Jones L."/>
            <person name="Jones M."/>
            <person name="Leather S."/>
            <person name="McDonald S."/>
            <person name="McLean J."/>
            <person name="Mooney P."/>
            <person name="Moule S."/>
            <person name="Mungall K.L."/>
            <person name="Murphy L.D."/>
            <person name="Niblett D."/>
            <person name="Odell C."/>
            <person name="Oliver K."/>
            <person name="O'Neil S."/>
            <person name="Pearson D."/>
            <person name="Quail M.A."/>
            <person name="Rabbinowitsch E."/>
            <person name="Rutherford K.M."/>
            <person name="Rutter S."/>
            <person name="Saunders D."/>
            <person name="Seeger K."/>
            <person name="Sharp S."/>
            <person name="Skelton J."/>
            <person name="Simmonds M.N."/>
            <person name="Squares R."/>
            <person name="Squares S."/>
            <person name="Stevens K."/>
            <person name="Taylor K."/>
            <person name="Taylor R.G."/>
            <person name="Tivey A."/>
            <person name="Walsh S.V."/>
            <person name="Warren T."/>
            <person name="Whitehead S."/>
            <person name="Woodward J.R."/>
            <person name="Volckaert G."/>
            <person name="Aert R."/>
            <person name="Robben J."/>
            <person name="Grymonprez B."/>
            <person name="Weltjens I."/>
            <person name="Vanstreels E."/>
            <person name="Rieger M."/>
            <person name="Schaefer M."/>
            <person name="Mueller-Auer S."/>
            <person name="Gabel C."/>
            <person name="Fuchs M."/>
            <person name="Duesterhoeft A."/>
            <person name="Fritzc C."/>
            <person name="Holzer E."/>
            <person name="Moestl D."/>
            <person name="Hilbert H."/>
            <person name="Borzym K."/>
            <person name="Langer I."/>
            <person name="Beck A."/>
            <person name="Lehrach H."/>
            <person name="Reinhardt R."/>
            <person name="Pohl T.M."/>
            <person name="Eger P."/>
            <person name="Zimmermann W."/>
            <person name="Wedler H."/>
            <person name="Wambutt R."/>
            <person name="Purnelle B."/>
            <person name="Goffeau A."/>
            <person name="Cadieu E."/>
            <person name="Dreano S."/>
            <person name="Gloux S."/>
            <person name="Lelaure V."/>
            <person name="Mottier S."/>
            <person name="Galibert F."/>
            <person name="Aves S.J."/>
            <person name="Xiang Z."/>
            <person name="Hunt C."/>
            <person name="Moore K."/>
            <person name="Hurst S.M."/>
            <person name="Lucas M."/>
            <person name="Rochet M."/>
            <person name="Gaillardin C."/>
            <person name="Tallada V.A."/>
            <person name="Garzon A."/>
            <person name="Thode G."/>
            <person name="Daga R.R."/>
            <person name="Cruzado L."/>
            <person name="Jimenez J."/>
            <person name="Sanchez M."/>
            <person name="del Rey F."/>
            <person name="Benito J."/>
            <person name="Dominguez A."/>
            <person name="Revuelta J.L."/>
            <person name="Moreno S."/>
            <person name="Armstrong J."/>
            <person name="Forsburg S.L."/>
            <person name="Cerutti L."/>
            <person name="Lowe T."/>
            <person name="McCombie W.R."/>
            <person name="Paulsen I."/>
            <person name="Potashkin J."/>
            <person name="Shpakovski G.V."/>
            <person name="Ussery D."/>
            <person name="Barrell B.G."/>
            <person name="Nurse P."/>
        </authorList>
    </citation>
    <scope>NUCLEOTIDE SEQUENCE [LARGE SCALE GENOMIC DNA]</scope>
    <source>
        <strain>972 / ATCC 24843</strain>
    </source>
</reference>
<reference key="2">
    <citation type="journal article" date="2006" name="Nat. Biotechnol.">
        <title>ORFeome cloning and global analysis of protein localization in the fission yeast Schizosaccharomyces pombe.</title>
        <authorList>
            <person name="Matsuyama A."/>
            <person name="Arai R."/>
            <person name="Yashiroda Y."/>
            <person name="Shirai A."/>
            <person name="Kamata A."/>
            <person name="Sekido S."/>
            <person name="Kobayashi Y."/>
            <person name="Hashimoto A."/>
            <person name="Hamamoto M."/>
            <person name="Hiraoka Y."/>
            <person name="Horinouchi S."/>
            <person name="Yoshida M."/>
        </authorList>
    </citation>
    <scope>SUBCELLULAR LOCATION [LARGE SCALE ANALYSIS]</scope>
</reference>
<organism>
    <name type="scientific">Schizosaccharomyces pombe (strain 972 / ATCC 24843)</name>
    <name type="common">Fission yeast</name>
    <dbReference type="NCBI Taxonomy" id="284812"/>
    <lineage>
        <taxon>Eukaryota</taxon>
        <taxon>Fungi</taxon>
        <taxon>Dikarya</taxon>
        <taxon>Ascomycota</taxon>
        <taxon>Taphrinomycotina</taxon>
        <taxon>Schizosaccharomycetes</taxon>
        <taxon>Schizosaccharomycetales</taxon>
        <taxon>Schizosaccharomycetaceae</taxon>
        <taxon>Schizosaccharomyces</taxon>
    </lineage>
</organism>
<comment type="function">
    <text evidence="1">Required for mitochondrial morphology. May control phospholipid metabolism in the mitochondrial intermembrane space (By similarity).</text>
</comment>
<comment type="subcellular location">
    <subcellularLocation>
        <location evidence="3">Cytoplasm</location>
    </subcellularLocation>
    <subcellularLocation>
        <location evidence="1">Mitochondrion inner membrane</location>
        <topology evidence="1">Peripheral membrane protein</topology>
        <orientation evidence="1">Intermembrane side</orientation>
    </subcellularLocation>
    <subcellularLocation>
        <location evidence="1">Mitochondrion intermembrane space</location>
    </subcellularLocation>
</comment>
<comment type="similarity">
    <text evidence="4">Belongs to the slowmo family.</text>
</comment>
<name>UPS2_SCHPO</name>
<accession>O59707</accession>
<sequence>MKIFESCHLFQYPFEQVSAAHWQKYPNEHATHVIAVDTLDRKVLDNGVLYTERLITCHQALPRWILKLIDGAQDCYIRETSYVDLKARTLTLLTSNLTFSDRLRVDETVTYSPHPELEATVFQQEARIEALACMKRLSNLIEQWSVDGFGKKASRGKEGFESVLEKINMSVFQTRPFGSSEATA</sequence>